<sequence>MKFFALFIQRPVATTLLSLAITLCGVLGFTLLPVSPLPQVDFPVISVYASLPGASPETMASSVATPLEHALGRIAGVNEMTSSSSLGSTNITLEFDLNRDINSAARDVQAALNAAQSLLPSGMPSRPHYYKVNPTDAPIMILTLTSDTYNQGQLYDFASTQLAQKIAQVEGVSEVSVGGSSLPAVRVELNPGVLFHQGVSLDAVRKAISNANVRRPQGYVDSEQQHWQIQMNDELKTAENYRPIIVHYNNNSPVRLQDVANVKDSVQNVRAAGMSGGEPAILLIIRREAGANIIATVNRIREQLPALHESIPASIQLKVAQDRTPTIRASIVEVERALVIAIGLVILVVFLFLRSGRATLIPAIAVPVSLIGTFTAMYLCGFSLNNLSLMALTVATGFVVDDAIVVLENISRHLEAGIKPMQAALQGVREVGFTVLSMSISLVAVFIPLLLMDGLVGRLFREFAITLTTSISISLLVSLTLTPMMCAHLLKSQRPKAQKKIRGFGKVLLKIQQVYGRSLMWVLNHSRWVLLILAGIIALNVWLYINIPKTFFPEQDTGRLLGFVRADQSISFQSMREKMKNFMQTINADPTVDSVIGFTGGGRVNNGFMFISLKPLKERSENAEQIISRLRIKLANEPGANLFLIPVQDIRAGGRQANASYQFTLLADDLNDLRKWEPVIRKALGQLPQLTDVNSDKEDKGAEMAIIYDRDTMSRLGINVSEANNLLNNAFGQRQISTIYQPLNQYKVVMEVAPEYTQDVSALEKMFVINNQGKAIPLSYFAHWQPANAPLSVNHQGLSAASTIAFNVPEGYTLSDAINAIERTTTELRVPSTVRGTFAGTAQIFQETLKSQLFLILAAIITVYLVLGILYESYIHPLTILSTLPSAGIGALLALELFDTPFSLIALIGIMLLIGIVKKNAIIMVDFAIEAQRNGNICARDAIFQASLLRFRPILMTTLAALFGSLPLVLSSGDGTELRQPLGITIVGGLVMSQLLTLYTTPVVYLCFDRLRAYPNRRNCCRQFEHGQRGKTGTYT</sequence>
<organism>
    <name type="scientific">Photorhabdus laumondii subsp. laumondii (strain DSM 15139 / CIP 105565 / TT01)</name>
    <name type="common">Photorhabdus luminescens subsp. laumondii</name>
    <dbReference type="NCBI Taxonomy" id="243265"/>
    <lineage>
        <taxon>Bacteria</taxon>
        <taxon>Pseudomonadati</taxon>
        <taxon>Pseudomonadota</taxon>
        <taxon>Gammaproteobacteria</taxon>
        <taxon>Enterobacterales</taxon>
        <taxon>Morganellaceae</taxon>
        <taxon>Photorhabdus</taxon>
    </lineage>
</organism>
<keyword id="KW-0997">Cell inner membrane</keyword>
<keyword id="KW-1003">Cell membrane</keyword>
<keyword id="KW-0472">Membrane</keyword>
<keyword id="KW-1185">Reference proteome</keyword>
<keyword id="KW-0812">Transmembrane</keyword>
<keyword id="KW-1133">Transmembrane helix</keyword>
<keyword id="KW-0813">Transport</keyword>
<proteinExistence type="inferred from homology"/>
<evidence type="ECO:0000255" key="1">
    <source>
        <dbReference type="HAMAP-Rule" id="MF_01424"/>
    </source>
</evidence>
<protein>
    <recommendedName>
        <fullName evidence="1">Multidrug resistance protein MdtC</fullName>
    </recommendedName>
    <alternativeName>
        <fullName evidence="1">Multidrug transporter MdtC</fullName>
    </alternativeName>
</protein>
<accession>Q7N3E1</accession>
<reference key="1">
    <citation type="journal article" date="2003" name="Nat. Biotechnol.">
        <title>The genome sequence of the entomopathogenic bacterium Photorhabdus luminescens.</title>
        <authorList>
            <person name="Duchaud E."/>
            <person name="Rusniok C."/>
            <person name="Frangeul L."/>
            <person name="Buchrieser C."/>
            <person name="Givaudan A."/>
            <person name="Taourit S."/>
            <person name="Bocs S."/>
            <person name="Boursaux-Eude C."/>
            <person name="Chandler M."/>
            <person name="Charles J.-F."/>
            <person name="Dassa E."/>
            <person name="Derose R."/>
            <person name="Derzelle S."/>
            <person name="Freyssinet G."/>
            <person name="Gaudriault S."/>
            <person name="Medigue C."/>
            <person name="Lanois A."/>
            <person name="Powell K."/>
            <person name="Siguier P."/>
            <person name="Vincent R."/>
            <person name="Wingate V."/>
            <person name="Zouine M."/>
            <person name="Glaser P."/>
            <person name="Boemare N."/>
            <person name="Danchin A."/>
            <person name="Kunst F."/>
        </authorList>
    </citation>
    <scope>NUCLEOTIDE SEQUENCE [LARGE SCALE GENOMIC DNA]</scope>
    <source>
        <strain>DSM 15139 / CIP 105565 / TT01</strain>
    </source>
</reference>
<gene>
    <name evidence="1" type="primary">mdtC</name>
    <name type="ordered locus">plu2776</name>
</gene>
<comment type="subunit">
    <text evidence="1">Part of a tripartite efflux system composed of MdtA, MdtB and MdtC. MdtC forms a heteromultimer with MdtB.</text>
</comment>
<comment type="subcellular location">
    <subcellularLocation>
        <location evidence="1">Cell inner membrane</location>
        <topology evidence="1">Multi-pass membrane protein</topology>
    </subcellularLocation>
</comment>
<comment type="similarity">
    <text evidence="1">Belongs to the resistance-nodulation-cell division (RND) (TC 2.A.6) family. MdtC subfamily.</text>
</comment>
<name>MDTC_PHOLL</name>
<feature type="chain" id="PRO_0000161835" description="Multidrug resistance protein MdtC">
    <location>
        <begin position="1"/>
        <end position="1036"/>
    </location>
</feature>
<feature type="transmembrane region" description="Helical" evidence="1">
    <location>
        <begin position="12"/>
        <end position="34"/>
    </location>
</feature>
<feature type="transmembrane region" description="Helical" evidence="1">
    <location>
        <begin position="336"/>
        <end position="353"/>
    </location>
</feature>
<feature type="transmembrane region" description="Helical" evidence="1">
    <location>
        <begin position="360"/>
        <end position="382"/>
    </location>
</feature>
<feature type="transmembrane region" description="Helical" evidence="1">
    <location>
        <begin position="431"/>
        <end position="450"/>
    </location>
</feature>
<feature type="transmembrane region" description="Helical" evidence="1">
    <location>
        <begin position="463"/>
        <end position="485"/>
    </location>
</feature>
<feature type="transmembrane region" description="Helical" evidence="1">
    <location>
        <begin position="528"/>
        <end position="547"/>
    </location>
</feature>
<feature type="transmembrane region" description="Helical" evidence="1">
    <location>
        <begin position="853"/>
        <end position="875"/>
    </location>
</feature>
<feature type="transmembrane region" description="Helical" evidence="1">
    <location>
        <begin position="895"/>
        <end position="917"/>
    </location>
</feature>
<feature type="transmembrane region" description="Helical" evidence="1">
    <location>
        <begin position="949"/>
        <end position="971"/>
    </location>
</feature>
<feature type="transmembrane region" description="Helical" evidence="1">
    <location>
        <begin position="986"/>
        <end position="1008"/>
    </location>
</feature>
<dbReference type="EMBL" id="BX571868">
    <property type="protein sequence ID" value="CAE15150.1"/>
    <property type="molecule type" value="Genomic_DNA"/>
</dbReference>
<dbReference type="RefSeq" id="WP_011146996.1">
    <property type="nucleotide sequence ID" value="NC_005126.1"/>
</dbReference>
<dbReference type="SMR" id="Q7N3E1"/>
<dbReference type="STRING" id="243265.plu2776"/>
<dbReference type="GeneID" id="48849039"/>
<dbReference type="KEGG" id="plu:plu2776"/>
<dbReference type="eggNOG" id="COG0841">
    <property type="taxonomic scope" value="Bacteria"/>
</dbReference>
<dbReference type="HOGENOM" id="CLU_002755_1_2_6"/>
<dbReference type="OrthoDB" id="9757904at2"/>
<dbReference type="Proteomes" id="UP000002514">
    <property type="component" value="Chromosome"/>
</dbReference>
<dbReference type="GO" id="GO:0005886">
    <property type="term" value="C:plasma membrane"/>
    <property type="evidence" value="ECO:0007669"/>
    <property type="project" value="UniProtKB-SubCell"/>
</dbReference>
<dbReference type="GO" id="GO:0042910">
    <property type="term" value="F:xenobiotic transmembrane transporter activity"/>
    <property type="evidence" value="ECO:0007669"/>
    <property type="project" value="TreeGrafter"/>
</dbReference>
<dbReference type="FunFam" id="1.20.1640.10:FF:000001">
    <property type="entry name" value="Efflux pump membrane transporter"/>
    <property type="match status" value="1"/>
</dbReference>
<dbReference type="FunFam" id="3.30.70.1430:FF:000001">
    <property type="entry name" value="Efflux pump membrane transporter"/>
    <property type="match status" value="1"/>
</dbReference>
<dbReference type="FunFam" id="3.30.2090.10:FF:000004">
    <property type="entry name" value="Multidrug resistance protein MdtC"/>
    <property type="match status" value="1"/>
</dbReference>
<dbReference type="Gene3D" id="3.30.70.1430">
    <property type="entry name" value="Multidrug efflux transporter AcrB pore domain"/>
    <property type="match status" value="2"/>
</dbReference>
<dbReference type="Gene3D" id="3.30.70.1440">
    <property type="entry name" value="Multidrug efflux transporter AcrB pore domain"/>
    <property type="match status" value="1"/>
</dbReference>
<dbReference type="Gene3D" id="3.30.70.1320">
    <property type="entry name" value="Multidrug efflux transporter AcrB pore domain like"/>
    <property type="match status" value="1"/>
</dbReference>
<dbReference type="Gene3D" id="3.30.2090.10">
    <property type="entry name" value="Multidrug efflux transporter AcrB TolC docking domain, DN and DC subdomains"/>
    <property type="match status" value="2"/>
</dbReference>
<dbReference type="Gene3D" id="1.20.1640.10">
    <property type="entry name" value="Multidrug efflux transporter AcrB transmembrane domain"/>
    <property type="match status" value="2"/>
</dbReference>
<dbReference type="HAMAP" id="MF_01424">
    <property type="entry name" value="MdtC"/>
    <property type="match status" value="1"/>
</dbReference>
<dbReference type="InterPro" id="IPR027463">
    <property type="entry name" value="AcrB_DN_DC_subdom"/>
</dbReference>
<dbReference type="InterPro" id="IPR001036">
    <property type="entry name" value="Acrflvin-R"/>
</dbReference>
<dbReference type="InterPro" id="IPR023931">
    <property type="entry name" value="Multidrug-R_MdtC"/>
</dbReference>
<dbReference type="NCBIfam" id="NF007905">
    <property type="entry name" value="PRK10614.1"/>
    <property type="match status" value="1"/>
</dbReference>
<dbReference type="NCBIfam" id="NF033617">
    <property type="entry name" value="RND_permease_2"/>
    <property type="match status" value="1"/>
</dbReference>
<dbReference type="PANTHER" id="PTHR32063">
    <property type="match status" value="1"/>
</dbReference>
<dbReference type="PANTHER" id="PTHR32063:SF34">
    <property type="entry name" value="MULTIDRUG RESISTANCE PROTEIN MDTC"/>
    <property type="match status" value="1"/>
</dbReference>
<dbReference type="Pfam" id="PF00873">
    <property type="entry name" value="ACR_tran"/>
    <property type="match status" value="1"/>
</dbReference>
<dbReference type="PRINTS" id="PR00702">
    <property type="entry name" value="ACRIFLAVINRP"/>
</dbReference>
<dbReference type="SUPFAM" id="SSF82693">
    <property type="entry name" value="Multidrug efflux transporter AcrB pore domain, PN1, PN2, PC1 and PC2 subdomains"/>
    <property type="match status" value="4"/>
</dbReference>
<dbReference type="SUPFAM" id="SSF82714">
    <property type="entry name" value="Multidrug efflux transporter AcrB TolC docking domain, DN and DC subdomains"/>
    <property type="match status" value="2"/>
</dbReference>
<dbReference type="SUPFAM" id="SSF82866">
    <property type="entry name" value="Multidrug efflux transporter AcrB transmembrane domain"/>
    <property type="match status" value="2"/>
</dbReference>